<gene>
    <name evidence="1" type="primary">trmFO</name>
    <name type="ordered locus">PMM1116</name>
</gene>
<organism>
    <name type="scientific">Prochlorococcus marinus subsp. pastoris (strain CCMP1986 / NIES-2087 / MED4)</name>
    <dbReference type="NCBI Taxonomy" id="59919"/>
    <lineage>
        <taxon>Bacteria</taxon>
        <taxon>Bacillati</taxon>
        <taxon>Cyanobacteriota</taxon>
        <taxon>Cyanophyceae</taxon>
        <taxon>Synechococcales</taxon>
        <taxon>Prochlorococcaceae</taxon>
        <taxon>Prochlorococcus</taxon>
    </lineage>
</organism>
<protein>
    <recommendedName>
        <fullName evidence="1">Methylenetetrahydrofolate--tRNA-(uracil-5-)-methyltransferase TrmFO</fullName>
        <ecNumber evidence="1">2.1.1.74</ecNumber>
    </recommendedName>
    <alternativeName>
        <fullName evidence="1">Folate-dependent tRNA (uracil-5-)-methyltransferase</fullName>
    </alternativeName>
    <alternativeName>
        <fullName evidence="1">Folate-dependent tRNA(M-5-U54)-methyltransferase</fullName>
    </alternativeName>
</protein>
<accession>Q7TU75</accession>
<sequence>MIDKQVIVIGAGLAGCEAAWQIANSGIAVKLVEMRPLNSTPAHHTSEFAELVCSNSFGALSADRAAGLLQEELRTFNSLIIQTADKFSVPAGGALAVDRSKFSKSLTQTLSAHPFVEISRFEQLDLPNKKNITVLATGPLTSDELATKIKKFTGIDSCHFFDAASPIIYGDSINHEIVFKASRYDKGDPAYLNCPINKLDYFNFRNALINGEQASLKDFDKESANFFEACLPIEEIARRGIETMRYGPLKSIGLWNPNWGDLFDRENRLKKRPHAIVQLRKEDLEGKLLNMVGFQTNLKWSEQKRIFRMIPGLEKAEFVRFGVMHRNTFLESPKLLLPTLQFLKRETLFAAGQITGTEGYAAAAAGGLLAGINASLLAKNKNLVTFPNESMIGSLMNFISNRNEIMSNQKKNKFQPMPASFGLVPELTNKIKDKKLRYKAYQERSLKELQVFKKVLDASFKNDQLLVEIN</sequence>
<dbReference type="EC" id="2.1.1.74" evidence="1"/>
<dbReference type="EMBL" id="BX548174">
    <property type="protein sequence ID" value="CAE19575.1"/>
    <property type="molecule type" value="Genomic_DNA"/>
</dbReference>
<dbReference type="RefSeq" id="WP_011132749.1">
    <property type="nucleotide sequence ID" value="NC_005072.1"/>
</dbReference>
<dbReference type="SMR" id="Q7TU75"/>
<dbReference type="STRING" id="59919.PMM1116"/>
<dbReference type="KEGG" id="pmm:PMM1116"/>
<dbReference type="eggNOG" id="COG1206">
    <property type="taxonomic scope" value="Bacteria"/>
</dbReference>
<dbReference type="HOGENOM" id="CLU_033057_1_0_3"/>
<dbReference type="OrthoDB" id="9803114at2"/>
<dbReference type="Proteomes" id="UP000001026">
    <property type="component" value="Chromosome"/>
</dbReference>
<dbReference type="GO" id="GO:0005829">
    <property type="term" value="C:cytosol"/>
    <property type="evidence" value="ECO:0007669"/>
    <property type="project" value="TreeGrafter"/>
</dbReference>
<dbReference type="GO" id="GO:0050660">
    <property type="term" value="F:flavin adenine dinucleotide binding"/>
    <property type="evidence" value="ECO:0007669"/>
    <property type="project" value="UniProtKB-UniRule"/>
</dbReference>
<dbReference type="GO" id="GO:0047151">
    <property type="term" value="F:tRNA (uracil(54)-C5)-methyltransferase activity, 5,10-methylenetetrahydrofolate-dependent"/>
    <property type="evidence" value="ECO:0007669"/>
    <property type="project" value="UniProtKB-UniRule"/>
</dbReference>
<dbReference type="GO" id="GO:0030488">
    <property type="term" value="P:tRNA methylation"/>
    <property type="evidence" value="ECO:0007669"/>
    <property type="project" value="TreeGrafter"/>
</dbReference>
<dbReference type="GO" id="GO:0002098">
    <property type="term" value="P:tRNA wobble uridine modification"/>
    <property type="evidence" value="ECO:0007669"/>
    <property type="project" value="TreeGrafter"/>
</dbReference>
<dbReference type="Gene3D" id="3.50.50.60">
    <property type="entry name" value="FAD/NAD(P)-binding domain"/>
    <property type="match status" value="2"/>
</dbReference>
<dbReference type="HAMAP" id="MF_01037">
    <property type="entry name" value="TrmFO"/>
    <property type="match status" value="1"/>
</dbReference>
<dbReference type="InterPro" id="IPR036188">
    <property type="entry name" value="FAD/NAD-bd_sf"/>
</dbReference>
<dbReference type="InterPro" id="IPR002218">
    <property type="entry name" value="MnmG-rel"/>
</dbReference>
<dbReference type="InterPro" id="IPR020595">
    <property type="entry name" value="MnmG-rel_CS"/>
</dbReference>
<dbReference type="InterPro" id="IPR040131">
    <property type="entry name" value="MnmG_N"/>
</dbReference>
<dbReference type="InterPro" id="IPR004417">
    <property type="entry name" value="TrmFO"/>
</dbReference>
<dbReference type="NCBIfam" id="TIGR00137">
    <property type="entry name" value="gid_trmFO"/>
    <property type="match status" value="1"/>
</dbReference>
<dbReference type="NCBIfam" id="NF003739">
    <property type="entry name" value="PRK05335.1"/>
    <property type="match status" value="1"/>
</dbReference>
<dbReference type="PANTHER" id="PTHR11806">
    <property type="entry name" value="GLUCOSE INHIBITED DIVISION PROTEIN A"/>
    <property type="match status" value="1"/>
</dbReference>
<dbReference type="PANTHER" id="PTHR11806:SF2">
    <property type="entry name" value="METHYLENETETRAHYDROFOLATE--TRNA-(URACIL-5-)-METHYLTRANSFERASE TRMFO"/>
    <property type="match status" value="1"/>
</dbReference>
<dbReference type="Pfam" id="PF01134">
    <property type="entry name" value="GIDA"/>
    <property type="match status" value="1"/>
</dbReference>
<dbReference type="SUPFAM" id="SSF51905">
    <property type="entry name" value="FAD/NAD(P)-binding domain"/>
    <property type="match status" value="1"/>
</dbReference>
<dbReference type="PROSITE" id="PS01281">
    <property type="entry name" value="GIDA_2"/>
    <property type="match status" value="1"/>
</dbReference>
<proteinExistence type="inferred from homology"/>
<reference key="1">
    <citation type="journal article" date="2003" name="Nature">
        <title>Genome divergence in two Prochlorococcus ecotypes reflects oceanic niche differentiation.</title>
        <authorList>
            <person name="Rocap G."/>
            <person name="Larimer F.W."/>
            <person name="Lamerdin J.E."/>
            <person name="Malfatti S."/>
            <person name="Chain P."/>
            <person name="Ahlgren N.A."/>
            <person name="Arellano A."/>
            <person name="Coleman M."/>
            <person name="Hauser L."/>
            <person name="Hess W.R."/>
            <person name="Johnson Z.I."/>
            <person name="Land M.L."/>
            <person name="Lindell D."/>
            <person name="Post A.F."/>
            <person name="Regala W."/>
            <person name="Shah M."/>
            <person name="Shaw S.L."/>
            <person name="Steglich C."/>
            <person name="Sullivan M.B."/>
            <person name="Ting C.S."/>
            <person name="Tolonen A."/>
            <person name="Webb E.A."/>
            <person name="Zinser E.R."/>
            <person name="Chisholm S.W."/>
        </authorList>
    </citation>
    <scope>NUCLEOTIDE SEQUENCE [LARGE SCALE GENOMIC DNA]</scope>
    <source>
        <strain>CCMP1986 / NIES-2087 / MED4</strain>
    </source>
</reference>
<feature type="chain" id="PRO_0000346384" description="Methylenetetrahydrofolate--tRNA-(uracil-5-)-methyltransferase TrmFO">
    <location>
        <begin position="1"/>
        <end position="470"/>
    </location>
</feature>
<feature type="binding site" evidence="1">
    <location>
        <begin position="10"/>
        <end position="15"/>
    </location>
    <ligand>
        <name>FAD</name>
        <dbReference type="ChEBI" id="CHEBI:57692"/>
    </ligand>
</feature>
<keyword id="KW-0963">Cytoplasm</keyword>
<keyword id="KW-0274">FAD</keyword>
<keyword id="KW-0285">Flavoprotein</keyword>
<keyword id="KW-0489">Methyltransferase</keyword>
<keyword id="KW-0520">NAD</keyword>
<keyword id="KW-0521">NADP</keyword>
<keyword id="KW-0808">Transferase</keyword>
<keyword id="KW-0819">tRNA processing</keyword>
<name>TRMFO_PROMP</name>
<evidence type="ECO:0000255" key="1">
    <source>
        <dbReference type="HAMAP-Rule" id="MF_01037"/>
    </source>
</evidence>
<comment type="function">
    <text evidence="1">Catalyzes the folate-dependent formation of 5-methyl-uridine at position 54 (M-5-U54) in all tRNAs.</text>
</comment>
<comment type="catalytic activity">
    <reaction evidence="1">
        <text>uridine(54) in tRNA + (6R)-5,10-methylene-5,6,7,8-tetrahydrofolate + NADH + H(+) = 5-methyluridine(54) in tRNA + (6S)-5,6,7,8-tetrahydrofolate + NAD(+)</text>
        <dbReference type="Rhea" id="RHEA:16873"/>
        <dbReference type="Rhea" id="RHEA-COMP:10167"/>
        <dbReference type="Rhea" id="RHEA-COMP:10193"/>
        <dbReference type="ChEBI" id="CHEBI:15378"/>
        <dbReference type="ChEBI" id="CHEBI:15636"/>
        <dbReference type="ChEBI" id="CHEBI:57453"/>
        <dbReference type="ChEBI" id="CHEBI:57540"/>
        <dbReference type="ChEBI" id="CHEBI:57945"/>
        <dbReference type="ChEBI" id="CHEBI:65315"/>
        <dbReference type="ChEBI" id="CHEBI:74447"/>
        <dbReference type="EC" id="2.1.1.74"/>
    </reaction>
</comment>
<comment type="catalytic activity">
    <reaction evidence="1">
        <text>uridine(54) in tRNA + (6R)-5,10-methylene-5,6,7,8-tetrahydrofolate + NADPH + H(+) = 5-methyluridine(54) in tRNA + (6S)-5,6,7,8-tetrahydrofolate + NADP(+)</text>
        <dbReference type="Rhea" id="RHEA:62372"/>
        <dbReference type="Rhea" id="RHEA-COMP:10167"/>
        <dbReference type="Rhea" id="RHEA-COMP:10193"/>
        <dbReference type="ChEBI" id="CHEBI:15378"/>
        <dbReference type="ChEBI" id="CHEBI:15636"/>
        <dbReference type="ChEBI" id="CHEBI:57453"/>
        <dbReference type="ChEBI" id="CHEBI:57783"/>
        <dbReference type="ChEBI" id="CHEBI:58349"/>
        <dbReference type="ChEBI" id="CHEBI:65315"/>
        <dbReference type="ChEBI" id="CHEBI:74447"/>
        <dbReference type="EC" id="2.1.1.74"/>
    </reaction>
</comment>
<comment type="cofactor">
    <cofactor evidence="1">
        <name>FAD</name>
        <dbReference type="ChEBI" id="CHEBI:57692"/>
    </cofactor>
</comment>
<comment type="subcellular location">
    <subcellularLocation>
        <location evidence="1">Cytoplasm</location>
    </subcellularLocation>
</comment>
<comment type="similarity">
    <text evidence="1">Belongs to the MnmG family. TrmFO subfamily.</text>
</comment>